<evidence type="ECO:0000255" key="1">
    <source>
        <dbReference type="HAMAP-Rule" id="MF_01325"/>
    </source>
</evidence>
<evidence type="ECO:0000305" key="2"/>
<name>RL3_SHEHH</name>
<reference key="1">
    <citation type="submission" date="2008-01" db="EMBL/GenBank/DDBJ databases">
        <title>Complete sequence of Shewanella halifaxensis HAW-EB4.</title>
        <authorList>
            <consortium name="US DOE Joint Genome Institute"/>
            <person name="Copeland A."/>
            <person name="Lucas S."/>
            <person name="Lapidus A."/>
            <person name="Glavina del Rio T."/>
            <person name="Dalin E."/>
            <person name="Tice H."/>
            <person name="Bruce D."/>
            <person name="Goodwin L."/>
            <person name="Pitluck S."/>
            <person name="Sims D."/>
            <person name="Brettin T."/>
            <person name="Detter J.C."/>
            <person name="Han C."/>
            <person name="Kuske C.R."/>
            <person name="Schmutz J."/>
            <person name="Larimer F."/>
            <person name="Land M."/>
            <person name="Hauser L."/>
            <person name="Kyrpides N."/>
            <person name="Kim E."/>
            <person name="Zhao J.-S."/>
            <person name="Richardson P."/>
        </authorList>
    </citation>
    <scope>NUCLEOTIDE SEQUENCE [LARGE SCALE GENOMIC DNA]</scope>
    <source>
        <strain>HAW-EB4</strain>
    </source>
</reference>
<accession>B0TM12</accession>
<keyword id="KW-0488">Methylation</keyword>
<keyword id="KW-0687">Ribonucleoprotein</keyword>
<keyword id="KW-0689">Ribosomal protein</keyword>
<keyword id="KW-0694">RNA-binding</keyword>
<keyword id="KW-0699">rRNA-binding</keyword>
<gene>
    <name evidence="1" type="primary">rplC</name>
    <name type="ordered locus">Shal_4134</name>
</gene>
<dbReference type="EMBL" id="CP000931">
    <property type="protein sequence ID" value="ABZ78674.1"/>
    <property type="molecule type" value="Genomic_DNA"/>
</dbReference>
<dbReference type="RefSeq" id="WP_012279181.1">
    <property type="nucleotide sequence ID" value="NC_010334.1"/>
</dbReference>
<dbReference type="SMR" id="B0TM12"/>
<dbReference type="STRING" id="458817.Shal_4134"/>
<dbReference type="KEGG" id="shl:Shal_4134"/>
<dbReference type="eggNOG" id="COG0087">
    <property type="taxonomic scope" value="Bacteria"/>
</dbReference>
<dbReference type="HOGENOM" id="CLU_044142_4_1_6"/>
<dbReference type="OrthoDB" id="9806135at2"/>
<dbReference type="Proteomes" id="UP000001317">
    <property type="component" value="Chromosome"/>
</dbReference>
<dbReference type="GO" id="GO:0022625">
    <property type="term" value="C:cytosolic large ribosomal subunit"/>
    <property type="evidence" value="ECO:0007669"/>
    <property type="project" value="TreeGrafter"/>
</dbReference>
<dbReference type="GO" id="GO:0019843">
    <property type="term" value="F:rRNA binding"/>
    <property type="evidence" value="ECO:0007669"/>
    <property type="project" value="UniProtKB-UniRule"/>
</dbReference>
<dbReference type="GO" id="GO:0003735">
    <property type="term" value="F:structural constituent of ribosome"/>
    <property type="evidence" value="ECO:0007669"/>
    <property type="project" value="InterPro"/>
</dbReference>
<dbReference type="GO" id="GO:0006412">
    <property type="term" value="P:translation"/>
    <property type="evidence" value="ECO:0007669"/>
    <property type="project" value="UniProtKB-UniRule"/>
</dbReference>
<dbReference type="FunFam" id="2.40.30.10:FF:000004">
    <property type="entry name" value="50S ribosomal protein L3"/>
    <property type="match status" value="1"/>
</dbReference>
<dbReference type="FunFam" id="3.30.160.810:FF:000001">
    <property type="entry name" value="50S ribosomal protein L3"/>
    <property type="match status" value="1"/>
</dbReference>
<dbReference type="Gene3D" id="3.30.160.810">
    <property type="match status" value="1"/>
</dbReference>
<dbReference type="Gene3D" id="2.40.30.10">
    <property type="entry name" value="Translation factors"/>
    <property type="match status" value="1"/>
</dbReference>
<dbReference type="HAMAP" id="MF_01325_B">
    <property type="entry name" value="Ribosomal_uL3_B"/>
    <property type="match status" value="1"/>
</dbReference>
<dbReference type="InterPro" id="IPR000597">
    <property type="entry name" value="Ribosomal_uL3"/>
</dbReference>
<dbReference type="InterPro" id="IPR019927">
    <property type="entry name" value="Ribosomal_uL3_bac/org-type"/>
</dbReference>
<dbReference type="InterPro" id="IPR019926">
    <property type="entry name" value="Ribosomal_uL3_CS"/>
</dbReference>
<dbReference type="InterPro" id="IPR009000">
    <property type="entry name" value="Transl_B-barrel_sf"/>
</dbReference>
<dbReference type="NCBIfam" id="TIGR03625">
    <property type="entry name" value="L3_bact"/>
    <property type="match status" value="1"/>
</dbReference>
<dbReference type="PANTHER" id="PTHR11229">
    <property type="entry name" value="50S RIBOSOMAL PROTEIN L3"/>
    <property type="match status" value="1"/>
</dbReference>
<dbReference type="PANTHER" id="PTHR11229:SF16">
    <property type="entry name" value="LARGE RIBOSOMAL SUBUNIT PROTEIN UL3C"/>
    <property type="match status" value="1"/>
</dbReference>
<dbReference type="Pfam" id="PF00297">
    <property type="entry name" value="Ribosomal_L3"/>
    <property type="match status" value="1"/>
</dbReference>
<dbReference type="SUPFAM" id="SSF50447">
    <property type="entry name" value="Translation proteins"/>
    <property type="match status" value="1"/>
</dbReference>
<dbReference type="PROSITE" id="PS00474">
    <property type="entry name" value="RIBOSOMAL_L3"/>
    <property type="match status" value="1"/>
</dbReference>
<proteinExistence type="inferred from homology"/>
<protein>
    <recommendedName>
        <fullName evidence="1">Large ribosomal subunit protein uL3</fullName>
    </recommendedName>
    <alternativeName>
        <fullName evidence="2">50S ribosomal protein L3</fullName>
    </alternativeName>
</protein>
<feature type="chain" id="PRO_1000086460" description="Large ribosomal subunit protein uL3">
    <location>
        <begin position="1"/>
        <end position="212"/>
    </location>
</feature>
<feature type="modified residue" description="N5-methylglutamine" evidence="1">
    <location>
        <position position="153"/>
    </location>
</feature>
<organism>
    <name type="scientific">Shewanella halifaxensis (strain HAW-EB4)</name>
    <dbReference type="NCBI Taxonomy" id="458817"/>
    <lineage>
        <taxon>Bacteria</taxon>
        <taxon>Pseudomonadati</taxon>
        <taxon>Pseudomonadota</taxon>
        <taxon>Gammaproteobacteria</taxon>
        <taxon>Alteromonadales</taxon>
        <taxon>Shewanellaceae</taxon>
        <taxon>Shewanella</taxon>
    </lineage>
</organism>
<sequence>MAIGLIGRKVGMTRIFNEDGASVPVTVIEIAANRVTQVRTLDTDGYRALQVTTGTKKANRITKPEAGHFAKAGVEAGRGLWEMRLADGEGEGIEVGAELNVDIFADIAKVDVTGQSKGKGFQGGIKRWNFAMQDATHGNSLAHRSNGSIGQNQTPGRVFKGKKMSGHMGAERVTTQNLEVIRVDAERNLLLVKGAVPGATNGDLIIKPAVKA</sequence>
<comment type="function">
    <text evidence="1">One of the primary rRNA binding proteins, it binds directly near the 3'-end of the 23S rRNA, where it nucleates assembly of the 50S subunit.</text>
</comment>
<comment type="subunit">
    <text evidence="1">Part of the 50S ribosomal subunit. Forms a cluster with proteins L14 and L19.</text>
</comment>
<comment type="PTM">
    <text evidence="1">Methylated by PrmB.</text>
</comment>
<comment type="similarity">
    <text evidence="1">Belongs to the universal ribosomal protein uL3 family.</text>
</comment>